<reference key="1">
    <citation type="journal article" date="2002" name="Nucleic Acids Res.">
        <title>Genome sequence of Oceanobacillus iheyensis isolated from the Iheya Ridge and its unexpected adaptive capabilities to extreme environments.</title>
        <authorList>
            <person name="Takami H."/>
            <person name="Takaki Y."/>
            <person name="Uchiyama I."/>
        </authorList>
    </citation>
    <scope>NUCLEOTIDE SEQUENCE [LARGE SCALE GENOMIC DNA]</scope>
    <source>
        <strain>DSM 14371 / CIP 107618 / JCM 11309 / KCTC 3954 / HTE831</strain>
    </source>
</reference>
<gene>
    <name evidence="1" type="primary">recO</name>
    <name type="ordered locus">OB1950</name>
</gene>
<protein>
    <recommendedName>
        <fullName evidence="1">DNA repair protein RecO</fullName>
    </recommendedName>
    <alternativeName>
        <fullName evidence="1">Recombination protein O</fullName>
    </alternativeName>
</protein>
<feature type="chain" id="PRO_0000204977" description="DNA repair protein RecO">
    <location>
        <begin position="1"/>
        <end position="258"/>
    </location>
</feature>
<keyword id="KW-0227">DNA damage</keyword>
<keyword id="KW-0233">DNA recombination</keyword>
<keyword id="KW-0234">DNA repair</keyword>
<keyword id="KW-1185">Reference proteome</keyword>
<name>RECO_OCEIH</name>
<sequence>MLEKIDGIIIKTKDYGETHKLVTIFSNKIGKFNALAKGAKKPKSRMAAVTQPFINARFFVYIGSGLSTIQQGEVLDSFRIIREDIFKTAYVSYMAELTDKLLDAKENDPFLYEQFYQTLLWINNQDEVDIPVIMYELKLYKKAGFAPVLHQCSRCGNQEGLSKFSIREGGMLCQQCAYFDPEAIHISEKLSRLLYLFSEVDLKRIGNIRMKKENVQLIRKILYEYYDQYGGFWIKSRKVLDQLDFFIPNVKNGNSYNE</sequence>
<organism>
    <name type="scientific">Oceanobacillus iheyensis (strain DSM 14371 / CIP 107618 / JCM 11309 / KCTC 3954 / HTE831)</name>
    <dbReference type="NCBI Taxonomy" id="221109"/>
    <lineage>
        <taxon>Bacteria</taxon>
        <taxon>Bacillati</taxon>
        <taxon>Bacillota</taxon>
        <taxon>Bacilli</taxon>
        <taxon>Bacillales</taxon>
        <taxon>Bacillaceae</taxon>
        <taxon>Oceanobacillus</taxon>
    </lineage>
</organism>
<proteinExistence type="inferred from homology"/>
<accession>Q8CXD4</accession>
<comment type="function">
    <text evidence="1">Involved in DNA repair and RecF pathway recombination.</text>
</comment>
<comment type="similarity">
    <text evidence="1">Belongs to the RecO family.</text>
</comment>
<dbReference type="EMBL" id="BA000028">
    <property type="protein sequence ID" value="BAC13906.1"/>
    <property type="molecule type" value="Genomic_DNA"/>
</dbReference>
<dbReference type="RefSeq" id="WP_011066347.1">
    <property type="nucleotide sequence ID" value="NC_004193.1"/>
</dbReference>
<dbReference type="SMR" id="Q8CXD4"/>
<dbReference type="STRING" id="221109.gene:10734196"/>
<dbReference type="KEGG" id="oih:OB1950"/>
<dbReference type="eggNOG" id="COG1381">
    <property type="taxonomic scope" value="Bacteria"/>
</dbReference>
<dbReference type="HOGENOM" id="CLU_066632_4_0_9"/>
<dbReference type="OrthoDB" id="9797083at2"/>
<dbReference type="PhylomeDB" id="Q8CXD4"/>
<dbReference type="Proteomes" id="UP000000822">
    <property type="component" value="Chromosome"/>
</dbReference>
<dbReference type="GO" id="GO:0043590">
    <property type="term" value="C:bacterial nucleoid"/>
    <property type="evidence" value="ECO:0007669"/>
    <property type="project" value="TreeGrafter"/>
</dbReference>
<dbReference type="GO" id="GO:0006310">
    <property type="term" value="P:DNA recombination"/>
    <property type="evidence" value="ECO:0007669"/>
    <property type="project" value="UniProtKB-UniRule"/>
</dbReference>
<dbReference type="GO" id="GO:0006302">
    <property type="term" value="P:double-strand break repair"/>
    <property type="evidence" value="ECO:0007669"/>
    <property type="project" value="TreeGrafter"/>
</dbReference>
<dbReference type="Gene3D" id="2.40.50.140">
    <property type="entry name" value="Nucleic acid-binding proteins"/>
    <property type="match status" value="1"/>
</dbReference>
<dbReference type="Gene3D" id="1.20.1440.120">
    <property type="entry name" value="Recombination protein O, C-terminal domain"/>
    <property type="match status" value="1"/>
</dbReference>
<dbReference type="HAMAP" id="MF_00201">
    <property type="entry name" value="RecO"/>
    <property type="match status" value="1"/>
</dbReference>
<dbReference type="InterPro" id="IPR037278">
    <property type="entry name" value="ARFGAP/RecO"/>
</dbReference>
<dbReference type="InterPro" id="IPR022572">
    <property type="entry name" value="DNA_rep/recomb_RecO_N"/>
</dbReference>
<dbReference type="InterPro" id="IPR012340">
    <property type="entry name" value="NA-bd_OB-fold"/>
</dbReference>
<dbReference type="InterPro" id="IPR003717">
    <property type="entry name" value="RecO"/>
</dbReference>
<dbReference type="InterPro" id="IPR042242">
    <property type="entry name" value="RecO_C"/>
</dbReference>
<dbReference type="NCBIfam" id="TIGR00613">
    <property type="entry name" value="reco"/>
    <property type="match status" value="1"/>
</dbReference>
<dbReference type="PANTHER" id="PTHR33991">
    <property type="entry name" value="DNA REPAIR PROTEIN RECO"/>
    <property type="match status" value="1"/>
</dbReference>
<dbReference type="PANTHER" id="PTHR33991:SF1">
    <property type="entry name" value="DNA REPAIR PROTEIN RECO"/>
    <property type="match status" value="1"/>
</dbReference>
<dbReference type="Pfam" id="PF02565">
    <property type="entry name" value="RecO_C"/>
    <property type="match status" value="1"/>
</dbReference>
<dbReference type="Pfam" id="PF11967">
    <property type="entry name" value="RecO_N"/>
    <property type="match status" value="1"/>
</dbReference>
<dbReference type="SUPFAM" id="SSF57863">
    <property type="entry name" value="ArfGap/RecO-like zinc finger"/>
    <property type="match status" value="1"/>
</dbReference>
<dbReference type="SUPFAM" id="SSF50249">
    <property type="entry name" value="Nucleic acid-binding proteins"/>
    <property type="match status" value="1"/>
</dbReference>
<evidence type="ECO:0000255" key="1">
    <source>
        <dbReference type="HAMAP-Rule" id="MF_00201"/>
    </source>
</evidence>